<dbReference type="EC" id="1.3.1.-"/>
<dbReference type="EMBL" id="J04996">
    <property type="protein sequence ID" value="AAA26009.1"/>
    <property type="molecule type" value="Genomic_DNA"/>
</dbReference>
<dbReference type="EMBL" id="CP000712">
    <property type="protein sequence ID" value="ABQ79008.1"/>
    <property type="molecule type" value="Genomic_DNA"/>
</dbReference>
<dbReference type="PIR" id="E36516">
    <property type="entry name" value="E36516"/>
</dbReference>
<dbReference type="SMR" id="P13859"/>
<dbReference type="KEGG" id="ppf:Pput_2877"/>
<dbReference type="eggNOG" id="COG1028">
    <property type="taxonomic scope" value="Bacteria"/>
</dbReference>
<dbReference type="HOGENOM" id="CLU_010194_1_0_6"/>
<dbReference type="BioCyc" id="MetaCyc:MONOMER-11352"/>
<dbReference type="UniPathway" id="UPA00273"/>
<dbReference type="GO" id="GO:0016628">
    <property type="term" value="F:oxidoreductase activity, acting on the CH-CH group of donors, NAD or NADP as acceptor"/>
    <property type="evidence" value="ECO:0007669"/>
    <property type="project" value="InterPro"/>
</dbReference>
<dbReference type="GO" id="GO:0042203">
    <property type="term" value="P:toluene catabolic process"/>
    <property type="evidence" value="ECO:0007669"/>
    <property type="project" value="UniProtKB-UniPathway"/>
</dbReference>
<dbReference type="CDD" id="cd05348">
    <property type="entry name" value="BphB-like_SDR_c"/>
    <property type="match status" value="1"/>
</dbReference>
<dbReference type="FunFam" id="3.40.50.720:FF:000151">
    <property type="entry name" value="3-phenylpropionate-dihydrodiol/cinnamic acid-dihydrodiol dehydrogenase"/>
    <property type="match status" value="1"/>
</dbReference>
<dbReference type="Gene3D" id="3.40.50.720">
    <property type="entry name" value="NAD(P)-binding Rossmann-like Domain"/>
    <property type="match status" value="1"/>
</dbReference>
<dbReference type="InterPro" id="IPR047950">
    <property type="entry name" value="BphB-like_SDR"/>
</dbReference>
<dbReference type="InterPro" id="IPR017711">
    <property type="entry name" value="BphB_TodD"/>
</dbReference>
<dbReference type="InterPro" id="IPR036291">
    <property type="entry name" value="NAD(P)-bd_dom_sf"/>
</dbReference>
<dbReference type="InterPro" id="IPR020904">
    <property type="entry name" value="Sc_DH/Rdtase_CS"/>
</dbReference>
<dbReference type="InterPro" id="IPR002347">
    <property type="entry name" value="SDR_fam"/>
</dbReference>
<dbReference type="NCBIfam" id="TIGR03325">
    <property type="entry name" value="BphB_TodD"/>
    <property type="match status" value="1"/>
</dbReference>
<dbReference type="NCBIfam" id="NF004849">
    <property type="entry name" value="PRK06200.1"/>
    <property type="match status" value="1"/>
</dbReference>
<dbReference type="PANTHER" id="PTHR43669">
    <property type="entry name" value="5-KETO-D-GLUCONATE 5-REDUCTASE"/>
    <property type="match status" value="1"/>
</dbReference>
<dbReference type="PANTHER" id="PTHR43669:SF3">
    <property type="entry name" value="ALCOHOL DEHYDROGENASE, PUTATIVE (AFU_ORTHOLOGUE AFUA_3G03445)-RELATED"/>
    <property type="match status" value="1"/>
</dbReference>
<dbReference type="Pfam" id="PF00106">
    <property type="entry name" value="adh_short"/>
    <property type="match status" value="1"/>
</dbReference>
<dbReference type="PRINTS" id="PR00081">
    <property type="entry name" value="GDHRDH"/>
</dbReference>
<dbReference type="PRINTS" id="PR00080">
    <property type="entry name" value="SDRFAMILY"/>
</dbReference>
<dbReference type="SUPFAM" id="SSF51735">
    <property type="entry name" value="NAD(P)-binding Rossmann-fold domains"/>
    <property type="match status" value="1"/>
</dbReference>
<dbReference type="PROSITE" id="PS00061">
    <property type="entry name" value="ADH_SHORT"/>
    <property type="match status" value="1"/>
</dbReference>
<sequence length="275" mass="28782">MRLEGEVALVTGGGAGLGRAIVDRYVAEGARVAVLDKSAAGLEALRKLHGDAIVGVEGDVRSLDSHREAVARCVEAFGKLDCLVGNAGVWDYLTQLVDIPDDLISEAFEEMFEVNVKGYILAAKAALPALYQSKGSAIFTVSNAGFYPGGGGVLYTAGKHAVIGLIKQLAHEWGPRIRVNGIAPGGILGSDLRGLKSLDLQDKSISTFPLDDMLKSVLPTGRAATAEEYAGAYVFFATRGDTVPLTGSVLNFDGGMGVRGLFEASLGAQLDKHFG</sequence>
<protein>
    <recommendedName>
        <fullName>Cis-toluene dihydrodiol dehydrogenase</fullName>
        <ecNumber>1.3.1.-</ecNumber>
    </recommendedName>
</protein>
<evidence type="ECO:0000250" key="1"/>
<evidence type="ECO:0000255" key="2">
    <source>
        <dbReference type="PROSITE-ProRule" id="PRU10001"/>
    </source>
</evidence>
<evidence type="ECO:0000305" key="3"/>
<accession>P13859</accession>
<accession>A5W4E8</accession>
<proteinExistence type="evidence at protein level"/>
<gene>
    <name type="primary">todD</name>
    <name type="ordered locus">Pput_2877</name>
</gene>
<keyword id="KW-0058">Aromatic hydrocarbons catabolism</keyword>
<keyword id="KW-0903">Direct protein sequencing</keyword>
<keyword id="KW-0520">NAD</keyword>
<keyword id="KW-0560">Oxidoreductase</keyword>
<comment type="catalytic activity">
    <reaction>
        <text>(1S,2R)-3-methylcyclohexa-3,5-diene-1,2-diol + NAD(+) = 3-methylcatechol + NADH + H(+)</text>
        <dbReference type="Rhea" id="RHEA:25193"/>
        <dbReference type="ChEBI" id="CHEBI:15378"/>
        <dbReference type="ChEBI" id="CHEBI:15565"/>
        <dbReference type="ChEBI" id="CHEBI:18404"/>
        <dbReference type="ChEBI" id="CHEBI:57540"/>
        <dbReference type="ChEBI" id="CHEBI:57945"/>
    </reaction>
</comment>
<comment type="pathway">
    <text>Xenobiotic degradation; toluene degradation.</text>
</comment>
<comment type="similarity">
    <text evidence="3">Belongs to the short-chain dehydrogenases/reductases (SDR) family.</text>
</comment>
<feature type="chain" id="PRO_0000054784" description="Cis-toluene dihydrodiol dehydrogenase">
    <location>
        <begin position="1"/>
        <end position="275"/>
    </location>
</feature>
<feature type="active site" description="Proton acceptor" evidence="2">
    <location>
        <position position="155"/>
    </location>
</feature>
<feature type="binding site" evidence="1">
    <location>
        <begin position="9"/>
        <end position="33"/>
    </location>
    <ligand>
        <name>NAD(+)</name>
        <dbReference type="ChEBI" id="CHEBI:57540"/>
    </ligand>
</feature>
<feature type="binding site" evidence="1">
    <location>
        <position position="142"/>
    </location>
    <ligand>
        <name>substrate</name>
    </ligand>
</feature>
<organism>
    <name type="scientific">Pseudomonas putida (strain ATCC 700007 / DSM 6899 / JCM 31910 / BCRC 17059 / LMG 24140 / F1)</name>
    <dbReference type="NCBI Taxonomy" id="351746"/>
    <lineage>
        <taxon>Bacteria</taxon>
        <taxon>Pseudomonadati</taxon>
        <taxon>Pseudomonadota</taxon>
        <taxon>Gammaproteobacteria</taxon>
        <taxon>Pseudomonadales</taxon>
        <taxon>Pseudomonadaceae</taxon>
        <taxon>Pseudomonas</taxon>
    </lineage>
</organism>
<name>TODD_PSEP1</name>
<reference key="1">
    <citation type="journal article" date="1989" name="J. Biol. Chem.">
        <title>Toluene degradation by Pseudomonas putida F1. Nucleotide sequence of the todC1C2BADE genes and their expression in Escherichia coli.</title>
        <authorList>
            <person name="Zylstra G.J."/>
            <person name="Gibson D.T."/>
        </authorList>
    </citation>
    <scope>NUCLEOTIDE SEQUENCE [GENOMIC DNA]</scope>
    <scope>PROTEIN SEQUENCE OF 1-12</scope>
</reference>
<reference key="2">
    <citation type="submission" date="2007-05" db="EMBL/GenBank/DDBJ databases">
        <title>Complete sequence of Pseudomonas putida F1.</title>
        <authorList>
            <consortium name="US DOE Joint Genome Institute"/>
            <person name="Copeland A."/>
            <person name="Lucas S."/>
            <person name="Lapidus A."/>
            <person name="Barry K."/>
            <person name="Detter J.C."/>
            <person name="Glavina del Rio T."/>
            <person name="Hammon N."/>
            <person name="Israni S."/>
            <person name="Dalin E."/>
            <person name="Tice H."/>
            <person name="Pitluck S."/>
            <person name="Chain P."/>
            <person name="Malfatti S."/>
            <person name="Shin M."/>
            <person name="Vergez L."/>
            <person name="Schmutz J."/>
            <person name="Larimer F."/>
            <person name="Land M."/>
            <person name="Hauser L."/>
            <person name="Kyrpides N."/>
            <person name="Lykidis A."/>
            <person name="Parales R."/>
            <person name="Richardson P."/>
        </authorList>
    </citation>
    <scope>NUCLEOTIDE SEQUENCE [LARGE SCALE GENOMIC DNA]</scope>
    <source>
        <strain>ATCC 700007 / DSM 6899 / JCM 31910 / BCRC 17059 / LMG 24140 / F1</strain>
    </source>
</reference>